<comment type="function">
    <text evidence="1">May be involved in the metabolism of insect hormones and in the breakdown of synthetic insecticides.</text>
</comment>
<comment type="cofactor">
    <cofactor evidence="1">
        <name>heme</name>
        <dbReference type="ChEBI" id="CHEBI:30413"/>
    </cofactor>
</comment>
<comment type="subcellular location">
    <subcellularLocation>
        <location evidence="3">Endoplasmic reticulum membrane</location>
        <topology evidence="3">Peripheral membrane protein</topology>
    </subcellularLocation>
    <subcellularLocation>
        <location evidence="3">Microsome membrane</location>
        <topology evidence="3">Peripheral membrane protein</topology>
    </subcellularLocation>
</comment>
<comment type="similarity">
    <text evidence="3">Belongs to the cytochrome P450 family.</text>
</comment>
<proteinExistence type="evidence at transcript level"/>
<sequence>MHLNIALWACGALLAVLLAWQQRKCWRLIWQLNGWRGVIQQPVLWLLLCINLHPNSILEKVSQYRVHFQRPLAVLVGTRVLLYIDDPAGMECVLNAPECLDKTFLQDGFFVRRGLLHARGQKWKLRRKQLNPAFSHNIVASFFDVFNSVGNQMVEQFQTQTNLHGQAVKFTAAEDLLSRAVLEVSCLTIMGTPTNFTQLDDAHIAHSYKRLLEISAVRVVKPWLQIRLLHRLLAPELYEESKKCAKLLEDFVGGIVRTKHRNWRLRDAVGGEKSGEDASNGWQRRIFIEQIFQLAANGEMTLEEIMDEAQSMVLVSFETVSNSIMLALLCLATNKGDCQRRLLAEIRALVPDVGQVGLEQLQQLRYLDAFVSESLRLLATVPMNLRHVSRDFRLAGRQHETIVPQNSIVVLDTFNMQRDERWWGANARQFDPQRFLDQEEEQLSKGHNDSGSGEKRRQRDRRHSYSFLPFSNGLRSCIGRRYGLFIMKVFLVKLITNFDFQSDFELEKLQFVENISLKFKNADDILLTIQPKKEST</sequence>
<gene>
    <name type="primary">Cyp318a1</name>
    <name type="ORF">CG1786</name>
</gene>
<reference key="1">
    <citation type="journal article" date="2000" name="Science">
        <title>The genome sequence of Drosophila melanogaster.</title>
        <authorList>
            <person name="Adams M.D."/>
            <person name="Celniker S.E."/>
            <person name="Holt R.A."/>
            <person name="Evans C.A."/>
            <person name="Gocayne J.D."/>
            <person name="Amanatides P.G."/>
            <person name="Scherer S.E."/>
            <person name="Li P.W."/>
            <person name="Hoskins R.A."/>
            <person name="Galle R.F."/>
            <person name="George R.A."/>
            <person name="Lewis S.E."/>
            <person name="Richards S."/>
            <person name="Ashburner M."/>
            <person name="Henderson S.N."/>
            <person name="Sutton G.G."/>
            <person name="Wortman J.R."/>
            <person name="Yandell M.D."/>
            <person name="Zhang Q."/>
            <person name="Chen L.X."/>
            <person name="Brandon R.C."/>
            <person name="Rogers Y.-H.C."/>
            <person name="Blazej R.G."/>
            <person name="Champe M."/>
            <person name="Pfeiffer B.D."/>
            <person name="Wan K.H."/>
            <person name="Doyle C."/>
            <person name="Baxter E.G."/>
            <person name="Helt G."/>
            <person name="Nelson C.R."/>
            <person name="Miklos G.L.G."/>
            <person name="Abril J.F."/>
            <person name="Agbayani A."/>
            <person name="An H.-J."/>
            <person name="Andrews-Pfannkoch C."/>
            <person name="Baldwin D."/>
            <person name="Ballew R.M."/>
            <person name="Basu A."/>
            <person name="Baxendale J."/>
            <person name="Bayraktaroglu L."/>
            <person name="Beasley E.M."/>
            <person name="Beeson K.Y."/>
            <person name="Benos P.V."/>
            <person name="Berman B.P."/>
            <person name="Bhandari D."/>
            <person name="Bolshakov S."/>
            <person name="Borkova D."/>
            <person name="Botchan M.R."/>
            <person name="Bouck J."/>
            <person name="Brokstein P."/>
            <person name="Brottier P."/>
            <person name="Burtis K.C."/>
            <person name="Busam D.A."/>
            <person name="Butler H."/>
            <person name="Cadieu E."/>
            <person name="Center A."/>
            <person name="Chandra I."/>
            <person name="Cherry J.M."/>
            <person name="Cawley S."/>
            <person name="Dahlke C."/>
            <person name="Davenport L.B."/>
            <person name="Davies P."/>
            <person name="de Pablos B."/>
            <person name="Delcher A."/>
            <person name="Deng Z."/>
            <person name="Mays A.D."/>
            <person name="Dew I."/>
            <person name="Dietz S.M."/>
            <person name="Dodson K."/>
            <person name="Doup L.E."/>
            <person name="Downes M."/>
            <person name="Dugan-Rocha S."/>
            <person name="Dunkov B.C."/>
            <person name="Dunn P."/>
            <person name="Durbin K.J."/>
            <person name="Evangelista C.C."/>
            <person name="Ferraz C."/>
            <person name="Ferriera S."/>
            <person name="Fleischmann W."/>
            <person name="Fosler C."/>
            <person name="Gabrielian A.E."/>
            <person name="Garg N.S."/>
            <person name="Gelbart W.M."/>
            <person name="Glasser K."/>
            <person name="Glodek A."/>
            <person name="Gong F."/>
            <person name="Gorrell J.H."/>
            <person name="Gu Z."/>
            <person name="Guan P."/>
            <person name="Harris M."/>
            <person name="Harris N.L."/>
            <person name="Harvey D.A."/>
            <person name="Heiman T.J."/>
            <person name="Hernandez J.R."/>
            <person name="Houck J."/>
            <person name="Hostin D."/>
            <person name="Houston K.A."/>
            <person name="Howland T.J."/>
            <person name="Wei M.-H."/>
            <person name="Ibegwam C."/>
            <person name="Jalali M."/>
            <person name="Kalush F."/>
            <person name="Karpen G.H."/>
            <person name="Ke Z."/>
            <person name="Kennison J.A."/>
            <person name="Ketchum K.A."/>
            <person name="Kimmel B.E."/>
            <person name="Kodira C.D."/>
            <person name="Kraft C.L."/>
            <person name="Kravitz S."/>
            <person name="Kulp D."/>
            <person name="Lai Z."/>
            <person name="Lasko P."/>
            <person name="Lei Y."/>
            <person name="Levitsky A.A."/>
            <person name="Li J.H."/>
            <person name="Li Z."/>
            <person name="Liang Y."/>
            <person name="Lin X."/>
            <person name="Liu X."/>
            <person name="Mattei B."/>
            <person name="McIntosh T.C."/>
            <person name="McLeod M.P."/>
            <person name="McPherson D."/>
            <person name="Merkulov G."/>
            <person name="Milshina N.V."/>
            <person name="Mobarry C."/>
            <person name="Morris J."/>
            <person name="Moshrefi A."/>
            <person name="Mount S.M."/>
            <person name="Moy M."/>
            <person name="Murphy B."/>
            <person name="Murphy L."/>
            <person name="Muzny D.M."/>
            <person name="Nelson D.L."/>
            <person name="Nelson D.R."/>
            <person name="Nelson K.A."/>
            <person name="Nixon K."/>
            <person name="Nusskern D.R."/>
            <person name="Pacleb J.M."/>
            <person name="Palazzolo M."/>
            <person name="Pittman G.S."/>
            <person name="Pan S."/>
            <person name="Pollard J."/>
            <person name="Puri V."/>
            <person name="Reese M.G."/>
            <person name="Reinert K."/>
            <person name="Remington K."/>
            <person name="Saunders R.D.C."/>
            <person name="Scheeler F."/>
            <person name="Shen H."/>
            <person name="Shue B.C."/>
            <person name="Siden-Kiamos I."/>
            <person name="Simpson M."/>
            <person name="Skupski M.P."/>
            <person name="Smith T.J."/>
            <person name="Spier E."/>
            <person name="Spradling A.C."/>
            <person name="Stapleton M."/>
            <person name="Strong R."/>
            <person name="Sun E."/>
            <person name="Svirskas R."/>
            <person name="Tector C."/>
            <person name="Turner R."/>
            <person name="Venter E."/>
            <person name="Wang A.H."/>
            <person name="Wang X."/>
            <person name="Wang Z.-Y."/>
            <person name="Wassarman D.A."/>
            <person name="Weinstock G.M."/>
            <person name="Weissenbach J."/>
            <person name="Williams S.M."/>
            <person name="Woodage T."/>
            <person name="Worley K.C."/>
            <person name="Wu D."/>
            <person name="Yang S."/>
            <person name="Yao Q.A."/>
            <person name="Ye J."/>
            <person name="Yeh R.-F."/>
            <person name="Zaveri J.S."/>
            <person name="Zhan M."/>
            <person name="Zhang G."/>
            <person name="Zhao Q."/>
            <person name="Zheng L."/>
            <person name="Zheng X.H."/>
            <person name="Zhong F.N."/>
            <person name="Zhong W."/>
            <person name="Zhou X."/>
            <person name="Zhu S.C."/>
            <person name="Zhu X."/>
            <person name="Smith H.O."/>
            <person name="Gibbs R.A."/>
            <person name="Myers E.W."/>
            <person name="Rubin G.M."/>
            <person name="Venter J.C."/>
        </authorList>
    </citation>
    <scope>NUCLEOTIDE SEQUENCE [LARGE SCALE GENOMIC DNA]</scope>
    <source>
        <strain>Berkeley</strain>
    </source>
</reference>
<reference key="2">
    <citation type="journal article" date="2002" name="Genome Biol.">
        <title>Annotation of the Drosophila melanogaster euchromatic genome: a systematic review.</title>
        <authorList>
            <person name="Misra S."/>
            <person name="Crosby M.A."/>
            <person name="Mungall C.J."/>
            <person name="Matthews B.B."/>
            <person name="Campbell K.S."/>
            <person name="Hradecky P."/>
            <person name="Huang Y."/>
            <person name="Kaminker J.S."/>
            <person name="Millburn G.H."/>
            <person name="Prochnik S.E."/>
            <person name="Smith C.D."/>
            <person name="Tupy J.L."/>
            <person name="Whitfield E.J."/>
            <person name="Bayraktaroglu L."/>
            <person name="Berman B.P."/>
            <person name="Bettencourt B.R."/>
            <person name="Celniker S.E."/>
            <person name="de Grey A.D.N.J."/>
            <person name="Drysdale R.A."/>
            <person name="Harris N.L."/>
            <person name="Richter J."/>
            <person name="Russo S."/>
            <person name="Schroeder A.J."/>
            <person name="Shu S.Q."/>
            <person name="Stapleton M."/>
            <person name="Yamada C."/>
            <person name="Ashburner M."/>
            <person name="Gelbart W.M."/>
            <person name="Rubin G.M."/>
            <person name="Lewis S.E."/>
        </authorList>
    </citation>
    <scope>GENOME REANNOTATION</scope>
    <source>
        <strain>Berkeley</strain>
    </source>
</reference>
<reference key="3">
    <citation type="journal article" date="2002" name="Genome Biol.">
        <title>A Drosophila full-length cDNA resource.</title>
        <authorList>
            <person name="Stapleton M."/>
            <person name="Carlson J.W."/>
            <person name="Brokstein P."/>
            <person name="Yu C."/>
            <person name="Champe M."/>
            <person name="George R.A."/>
            <person name="Guarin H."/>
            <person name="Kronmiller B."/>
            <person name="Pacleb J.M."/>
            <person name="Park S."/>
            <person name="Wan K.H."/>
            <person name="Rubin G.M."/>
            <person name="Celniker S.E."/>
        </authorList>
    </citation>
    <scope>NUCLEOTIDE SEQUENCE [LARGE SCALE MRNA]</scope>
    <source>
        <strain>Berkeley</strain>
        <tissue>Ovary</tissue>
    </source>
</reference>
<name>CP318_DROME</name>
<keyword id="KW-0256">Endoplasmic reticulum</keyword>
<keyword id="KW-0349">Heme</keyword>
<keyword id="KW-0408">Iron</keyword>
<keyword id="KW-0472">Membrane</keyword>
<keyword id="KW-0479">Metal-binding</keyword>
<keyword id="KW-0492">Microsome</keyword>
<keyword id="KW-0503">Monooxygenase</keyword>
<keyword id="KW-0560">Oxidoreductase</keyword>
<keyword id="KW-1185">Reference proteome</keyword>
<dbReference type="EC" id="1.14.-.-"/>
<dbReference type="EMBL" id="AE014298">
    <property type="protein sequence ID" value="AAF48136.3"/>
    <property type="molecule type" value="Genomic_DNA"/>
</dbReference>
<dbReference type="EMBL" id="AY113358">
    <property type="protein sequence ID" value="AAM29363.1"/>
    <property type="molecule type" value="mRNA"/>
</dbReference>
<dbReference type="RefSeq" id="NP_727590.1">
    <property type="nucleotide sequence ID" value="NM_167318.1"/>
</dbReference>
<dbReference type="SMR" id="Q9VYQ5"/>
<dbReference type="IntAct" id="Q9VYQ5">
    <property type="interactions" value="2"/>
</dbReference>
<dbReference type="STRING" id="7227.FBpp0073460"/>
<dbReference type="PaxDb" id="7227-FBpp0073460"/>
<dbReference type="DNASU" id="32172"/>
<dbReference type="EnsemblMetazoa" id="FBtr0073623">
    <property type="protein sequence ID" value="FBpp0073460"/>
    <property type="gene ID" value="FBgn0030369"/>
</dbReference>
<dbReference type="GeneID" id="32172"/>
<dbReference type="KEGG" id="dme:Dmel_CG1786"/>
<dbReference type="UCSC" id="CG1786-RA">
    <property type="organism name" value="d. melanogaster"/>
</dbReference>
<dbReference type="AGR" id="FB:FBgn0030369"/>
<dbReference type="CTD" id="32172"/>
<dbReference type="FlyBase" id="FBgn0030369">
    <property type="gene designation" value="Cyp318a1"/>
</dbReference>
<dbReference type="VEuPathDB" id="VectorBase:FBgn0030369"/>
<dbReference type="eggNOG" id="KOG0157">
    <property type="taxonomic scope" value="Eukaryota"/>
</dbReference>
<dbReference type="GeneTree" id="ENSGT00940000167150"/>
<dbReference type="HOGENOM" id="CLU_001570_5_1_1"/>
<dbReference type="InParanoid" id="Q9VYQ5"/>
<dbReference type="OMA" id="HIATTYK"/>
<dbReference type="OrthoDB" id="1470350at2759"/>
<dbReference type="PhylomeDB" id="Q9VYQ5"/>
<dbReference type="BioGRID-ORCS" id="32172">
    <property type="hits" value="0 hits in 1 CRISPR screen"/>
</dbReference>
<dbReference type="GenomeRNAi" id="32172"/>
<dbReference type="PRO" id="PR:Q9VYQ5"/>
<dbReference type="Proteomes" id="UP000000803">
    <property type="component" value="Chromosome X"/>
</dbReference>
<dbReference type="Bgee" id="FBgn0030369">
    <property type="expression patterns" value="Expressed in adult tracheocyte (Drosophila) in Malpighian tubule and 17 other cell types or tissues"/>
</dbReference>
<dbReference type="GO" id="GO:0005789">
    <property type="term" value="C:endoplasmic reticulum membrane"/>
    <property type="evidence" value="ECO:0007669"/>
    <property type="project" value="UniProtKB-SubCell"/>
</dbReference>
<dbReference type="GO" id="GO:0020037">
    <property type="term" value="F:heme binding"/>
    <property type="evidence" value="ECO:0007669"/>
    <property type="project" value="InterPro"/>
</dbReference>
<dbReference type="GO" id="GO:0005506">
    <property type="term" value="F:iron ion binding"/>
    <property type="evidence" value="ECO:0007669"/>
    <property type="project" value="InterPro"/>
</dbReference>
<dbReference type="GO" id="GO:0004497">
    <property type="term" value="F:monooxygenase activity"/>
    <property type="evidence" value="ECO:0007669"/>
    <property type="project" value="UniProtKB-KW"/>
</dbReference>
<dbReference type="GO" id="GO:0016705">
    <property type="term" value="F:oxidoreductase activity, acting on paired donors, with incorporation or reduction of molecular oxygen"/>
    <property type="evidence" value="ECO:0007669"/>
    <property type="project" value="InterPro"/>
</dbReference>
<dbReference type="CDD" id="cd11057">
    <property type="entry name" value="CYP313-like"/>
    <property type="match status" value="1"/>
</dbReference>
<dbReference type="FunFam" id="1.10.630.10:FF:000191">
    <property type="entry name" value="GD17061"/>
    <property type="match status" value="1"/>
</dbReference>
<dbReference type="Gene3D" id="1.10.630.10">
    <property type="entry name" value="Cytochrome P450"/>
    <property type="match status" value="1"/>
</dbReference>
<dbReference type="InterPro" id="IPR001128">
    <property type="entry name" value="Cyt_P450"/>
</dbReference>
<dbReference type="InterPro" id="IPR017972">
    <property type="entry name" value="Cyt_P450_CS"/>
</dbReference>
<dbReference type="InterPro" id="IPR002403">
    <property type="entry name" value="Cyt_P450_E_grp-IV"/>
</dbReference>
<dbReference type="InterPro" id="IPR036396">
    <property type="entry name" value="Cyt_P450_sf"/>
</dbReference>
<dbReference type="InterPro" id="IPR050196">
    <property type="entry name" value="Cytochrome_P450_Monoox"/>
</dbReference>
<dbReference type="PANTHER" id="PTHR24291:SF189">
    <property type="entry name" value="CYTOCHROME P450 4C3-RELATED"/>
    <property type="match status" value="1"/>
</dbReference>
<dbReference type="PANTHER" id="PTHR24291">
    <property type="entry name" value="CYTOCHROME P450 FAMILY 4"/>
    <property type="match status" value="1"/>
</dbReference>
<dbReference type="Pfam" id="PF00067">
    <property type="entry name" value="p450"/>
    <property type="match status" value="1"/>
</dbReference>
<dbReference type="PRINTS" id="PR00465">
    <property type="entry name" value="EP450IV"/>
</dbReference>
<dbReference type="PRINTS" id="PR00385">
    <property type="entry name" value="P450"/>
</dbReference>
<dbReference type="SUPFAM" id="SSF48264">
    <property type="entry name" value="Cytochrome P450"/>
    <property type="match status" value="1"/>
</dbReference>
<dbReference type="PROSITE" id="PS00086">
    <property type="entry name" value="CYTOCHROME_P450"/>
    <property type="match status" value="1"/>
</dbReference>
<accession>Q9VYQ5</accession>
<accession>Q8MZ48</accession>
<accession>Q9VYQ6</accession>
<feature type="chain" id="PRO_0000052331" description="Probable cytochrome P450 318a1">
    <location>
        <begin position="1"/>
        <end position="536"/>
    </location>
</feature>
<feature type="region of interest" description="Disordered" evidence="2">
    <location>
        <begin position="439"/>
        <end position="460"/>
    </location>
</feature>
<feature type="compositionally biased region" description="Basic and acidic residues" evidence="2">
    <location>
        <begin position="439"/>
        <end position="457"/>
    </location>
</feature>
<feature type="binding site" description="axial binding residue" evidence="1">
    <location>
        <position position="477"/>
    </location>
    <ligand>
        <name>heme</name>
        <dbReference type="ChEBI" id="CHEBI:30413"/>
    </ligand>
    <ligandPart>
        <name>Fe</name>
        <dbReference type="ChEBI" id="CHEBI:18248"/>
    </ligandPart>
</feature>
<protein>
    <recommendedName>
        <fullName>Probable cytochrome P450 318a1</fullName>
        <ecNumber>1.14.-.-</ecNumber>
    </recommendedName>
    <alternativeName>
        <fullName>CYPCCCXVIIIA1</fullName>
    </alternativeName>
</protein>
<organism>
    <name type="scientific">Drosophila melanogaster</name>
    <name type="common">Fruit fly</name>
    <dbReference type="NCBI Taxonomy" id="7227"/>
    <lineage>
        <taxon>Eukaryota</taxon>
        <taxon>Metazoa</taxon>
        <taxon>Ecdysozoa</taxon>
        <taxon>Arthropoda</taxon>
        <taxon>Hexapoda</taxon>
        <taxon>Insecta</taxon>
        <taxon>Pterygota</taxon>
        <taxon>Neoptera</taxon>
        <taxon>Endopterygota</taxon>
        <taxon>Diptera</taxon>
        <taxon>Brachycera</taxon>
        <taxon>Muscomorpha</taxon>
        <taxon>Ephydroidea</taxon>
        <taxon>Drosophilidae</taxon>
        <taxon>Drosophila</taxon>
        <taxon>Sophophora</taxon>
    </lineage>
</organism>
<evidence type="ECO:0000250" key="1"/>
<evidence type="ECO:0000256" key="2">
    <source>
        <dbReference type="SAM" id="MobiDB-lite"/>
    </source>
</evidence>
<evidence type="ECO:0000305" key="3"/>